<evidence type="ECO:0000255" key="1">
    <source>
        <dbReference type="HAMAP-Rule" id="MF_01820"/>
    </source>
</evidence>
<evidence type="ECO:0000255" key="2">
    <source>
        <dbReference type="PROSITE-ProRule" id="PRU01058"/>
    </source>
</evidence>
<evidence type="ECO:0000256" key="3">
    <source>
        <dbReference type="SAM" id="MobiDB-lite"/>
    </source>
</evidence>
<sequence>MTRGKPGRAGHDRRHASTGEHGLVIAAHGRHYLVERKGGGLLQCFPRGKRSECAVGDRVIFEATAVDQGVVVRVEERRNLLHRSDQFKSKQLAANIDQVLIMLGTEPGFSEDLLGRALVAAESLGITPLILLNKIDLTARLETARARLALYRALGYAVVELSVHAAPEAAHAVLAAHVAGRSSILIGQSGMGKSSLLNLLIPGVDAQTREISEKLDSGKHTTTFTRLYHLPSGWGHGGTLIDSPGFQEFGLHHLTEGMLERAFPEFRPRLTECRFYNCRHLQEPGCGILGAMAEGKIDPRRHALYAQLLHESEQQKPW</sequence>
<protein>
    <recommendedName>
        <fullName evidence="1">Small ribosomal subunit biogenesis GTPase RsgA</fullName>
        <ecNumber evidence="1">3.6.1.-</ecNumber>
    </recommendedName>
</protein>
<organism>
    <name type="scientific">Ralstonia nicotianae (strain ATCC BAA-1114 / GMI1000)</name>
    <name type="common">Ralstonia solanacearum</name>
    <dbReference type="NCBI Taxonomy" id="267608"/>
    <lineage>
        <taxon>Bacteria</taxon>
        <taxon>Pseudomonadati</taxon>
        <taxon>Pseudomonadota</taxon>
        <taxon>Betaproteobacteria</taxon>
        <taxon>Burkholderiales</taxon>
        <taxon>Burkholderiaceae</taxon>
        <taxon>Ralstonia</taxon>
        <taxon>Ralstonia solanacearum species complex</taxon>
    </lineage>
</organism>
<dbReference type="EC" id="3.6.1.-" evidence="1"/>
<dbReference type="EMBL" id="AL646052">
    <property type="protein sequence ID" value="CAD14642.1"/>
    <property type="molecule type" value="Genomic_DNA"/>
</dbReference>
<dbReference type="RefSeq" id="WP_011000892.1">
    <property type="nucleotide sequence ID" value="NC_003295.1"/>
</dbReference>
<dbReference type="SMR" id="Q8Y0V3"/>
<dbReference type="STRING" id="267608.RSc0940"/>
<dbReference type="EnsemblBacteria" id="CAD14642">
    <property type="protein sequence ID" value="CAD14642"/>
    <property type="gene ID" value="RSc0940"/>
</dbReference>
<dbReference type="KEGG" id="rso:RSc0940"/>
<dbReference type="PATRIC" id="fig|267608.8.peg.963"/>
<dbReference type="eggNOG" id="COG1162">
    <property type="taxonomic scope" value="Bacteria"/>
</dbReference>
<dbReference type="HOGENOM" id="CLU_033617_2_0_4"/>
<dbReference type="Proteomes" id="UP000001436">
    <property type="component" value="Chromosome"/>
</dbReference>
<dbReference type="GO" id="GO:0005737">
    <property type="term" value="C:cytoplasm"/>
    <property type="evidence" value="ECO:0007669"/>
    <property type="project" value="UniProtKB-SubCell"/>
</dbReference>
<dbReference type="GO" id="GO:0005525">
    <property type="term" value="F:GTP binding"/>
    <property type="evidence" value="ECO:0007669"/>
    <property type="project" value="UniProtKB-UniRule"/>
</dbReference>
<dbReference type="GO" id="GO:0003924">
    <property type="term" value="F:GTPase activity"/>
    <property type="evidence" value="ECO:0007669"/>
    <property type="project" value="UniProtKB-UniRule"/>
</dbReference>
<dbReference type="GO" id="GO:0046872">
    <property type="term" value="F:metal ion binding"/>
    <property type="evidence" value="ECO:0007669"/>
    <property type="project" value="UniProtKB-KW"/>
</dbReference>
<dbReference type="GO" id="GO:0019843">
    <property type="term" value="F:rRNA binding"/>
    <property type="evidence" value="ECO:0007669"/>
    <property type="project" value="UniProtKB-KW"/>
</dbReference>
<dbReference type="GO" id="GO:0042274">
    <property type="term" value="P:ribosomal small subunit biogenesis"/>
    <property type="evidence" value="ECO:0007669"/>
    <property type="project" value="UniProtKB-UniRule"/>
</dbReference>
<dbReference type="CDD" id="cd04466">
    <property type="entry name" value="S1_YloQ_GTPase"/>
    <property type="match status" value="1"/>
</dbReference>
<dbReference type="CDD" id="cd01854">
    <property type="entry name" value="YjeQ_EngC"/>
    <property type="match status" value="1"/>
</dbReference>
<dbReference type="Gene3D" id="2.40.50.140">
    <property type="entry name" value="Nucleic acid-binding proteins"/>
    <property type="match status" value="1"/>
</dbReference>
<dbReference type="Gene3D" id="3.40.50.300">
    <property type="entry name" value="P-loop containing nucleotide triphosphate hydrolases"/>
    <property type="match status" value="1"/>
</dbReference>
<dbReference type="Gene3D" id="1.10.40.50">
    <property type="entry name" value="Probable gtpase engc, domain 3"/>
    <property type="match status" value="1"/>
</dbReference>
<dbReference type="HAMAP" id="MF_01820">
    <property type="entry name" value="GTPase_RsgA"/>
    <property type="match status" value="1"/>
</dbReference>
<dbReference type="InterPro" id="IPR030378">
    <property type="entry name" value="G_CP_dom"/>
</dbReference>
<dbReference type="InterPro" id="IPR012340">
    <property type="entry name" value="NA-bd_OB-fold"/>
</dbReference>
<dbReference type="InterPro" id="IPR027417">
    <property type="entry name" value="P-loop_NTPase"/>
</dbReference>
<dbReference type="InterPro" id="IPR004881">
    <property type="entry name" value="Ribosome_biogen_GTPase_RsgA"/>
</dbReference>
<dbReference type="InterPro" id="IPR010914">
    <property type="entry name" value="RsgA_GTPase_dom"/>
</dbReference>
<dbReference type="InterPro" id="IPR031944">
    <property type="entry name" value="RsgA_N"/>
</dbReference>
<dbReference type="NCBIfam" id="TIGR00157">
    <property type="entry name" value="ribosome small subunit-dependent GTPase A"/>
    <property type="match status" value="1"/>
</dbReference>
<dbReference type="PANTHER" id="PTHR32120">
    <property type="entry name" value="SMALL RIBOSOMAL SUBUNIT BIOGENESIS GTPASE RSGA"/>
    <property type="match status" value="1"/>
</dbReference>
<dbReference type="PANTHER" id="PTHR32120:SF11">
    <property type="entry name" value="SMALL RIBOSOMAL SUBUNIT BIOGENESIS GTPASE RSGA 1, MITOCHONDRIAL-RELATED"/>
    <property type="match status" value="1"/>
</dbReference>
<dbReference type="Pfam" id="PF03193">
    <property type="entry name" value="RsgA_GTPase"/>
    <property type="match status" value="1"/>
</dbReference>
<dbReference type="SUPFAM" id="SSF50249">
    <property type="entry name" value="Nucleic acid-binding proteins"/>
    <property type="match status" value="1"/>
</dbReference>
<dbReference type="SUPFAM" id="SSF52540">
    <property type="entry name" value="P-loop containing nucleoside triphosphate hydrolases"/>
    <property type="match status" value="1"/>
</dbReference>
<dbReference type="PROSITE" id="PS50936">
    <property type="entry name" value="ENGC_GTPASE"/>
    <property type="match status" value="1"/>
</dbReference>
<dbReference type="PROSITE" id="PS51721">
    <property type="entry name" value="G_CP"/>
    <property type="match status" value="1"/>
</dbReference>
<gene>
    <name evidence="1" type="primary">rsgA</name>
    <name type="ordered locus">RSc0940</name>
    <name type="ORF">RS04469</name>
</gene>
<name>RSGA_RALN1</name>
<keyword id="KW-0963">Cytoplasm</keyword>
<keyword id="KW-0342">GTP-binding</keyword>
<keyword id="KW-0378">Hydrolase</keyword>
<keyword id="KW-0479">Metal-binding</keyword>
<keyword id="KW-0547">Nucleotide-binding</keyword>
<keyword id="KW-1185">Reference proteome</keyword>
<keyword id="KW-0690">Ribosome biogenesis</keyword>
<keyword id="KW-0694">RNA-binding</keyword>
<keyword id="KW-0699">rRNA-binding</keyword>
<keyword id="KW-0862">Zinc</keyword>
<feature type="chain" id="PRO_0000171509" description="Small ribosomal subunit biogenesis GTPase RsgA">
    <location>
        <begin position="1"/>
        <end position="318"/>
    </location>
</feature>
<feature type="domain" description="CP-type G" evidence="2">
    <location>
        <begin position="84"/>
        <end position="249"/>
    </location>
</feature>
<feature type="region of interest" description="Disordered" evidence="3">
    <location>
        <begin position="1"/>
        <end position="21"/>
    </location>
</feature>
<feature type="compositionally biased region" description="Basic residues" evidence="3">
    <location>
        <begin position="1"/>
        <end position="16"/>
    </location>
</feature>
<feature type="binding site" evidence="1">
    <location>
        <begin position="133"/>
        <end position="136"/>
    </location>
    <ligand>
        <name>GTP</name>
        <dbReference type="ChEBI" id="CHEBI:37565"/>
    </ligand>
</feature>
<feature type="binding site" evidence="1">
    <location>
        <begin position="187"/>
        <end position="195"/>
    </location>
    <ligand>
        <name>GTP</name>
        <dbReference type="ChEBI" id="CHEBI:37565"/>
    </ligand>
</feature>
<feature type="binding site" evidence="1">
    <location>
        <position position="273"/>
    </location>
    <ligand>
        <name>Zn(2+)</name>
        <dbReference type="ChEBI" id="CHEBI:29105"/>
    </ligand>
</feature>
<feature type="binding site" evidence="1">
    <location>
        <position position="278"/>
    </location>
    <ligand>
        <name>Zn(2+)</name>
        <dbReference type="ChEBI" id="CHEBI:29105"/>
    </ligand>
</feature>
<feature type="binding site" evidence="1">
    <location>
        <position position="280"/>
    </location>
    <ligand>
        <name>Zn(2+)</name>
        <dbReference type="ChEBI" id="CHEBI:29105"/>
    </ligand>
</feature>
<feature type="binding site" evidence="1">
    <location>
        <position position="286"/>
    </location>
    <ligand>
        <name>Zn(2+)</name>
        <dbReference type="ChEBI" id="CHEBI:29105"/>
    </ligand>
</feature>
<accession>Q8Y0V3</accession>
<proteinExistence type="inferred from homology"/>
<comment type="function">
    <text evidence="1">One of several proteins that assist in the late maturation steps of the functional core of the 30S ribosomal subunit. Helps release RbfA from mature subunits. May play a role in the assembly of ribosomal proteins into the subunit. Circularly permuted GTPase that catalyzes slow GTP hydrolysis, GTPase activity is stimulated by the 30S ribosomal subunit.</text>
</comment>
<comment type="cofactor">
    <cofactor evidence="1">
        <name>Zn(2+)</name>
        <dbReference type="ChEBI" id="CHEBI:29105"/>
    </cofactor>
    <text evidence="1">Binds 1 zinc ion per subunit.</text>
</comment>
<comment type="subunit">
    <text evidence="1">Monomer. Associates with 30S ribosomal subunit, binds 16S rRNA.</text>
</comment>
<comment type="subcellular location">
    <subcellularLocation>
        <location evidence="1">Cytoplasm</location>
    </subcellularLocation>
</comment>
<comment type="similarity">
    <text evidence="1">Belongs to the TRAFAC class YlqF/YawG GTPase family. RsgA subfamily.</text>
</comment>
<reference key="1">
    <citation type="journal article" date="2002" name="Nature">
        <title>Genome sequence of the plant pathogen Ralstonia solanacearum.</title>
        <authorList>
            <person name="Salanoubat M."/>
            <person name="Genin S."/>
            <person name="Artiguenave F."/>
            <person name="Gouzy J."/>
            <person name="Mangenot S."/>
            <person name="Arlat M."/>
            <person name="Billault A."/>
            <person name="Brottier P."/>
            <person name="Camus J.-C."/>
            <person name="Cattolico L."/>
            <person name="Chandler M."/>
            <person name="Choisne N."/>
            <person name="Claudel-Renard C."/>
            <person name="Cunnac S."/>
            <person name="Demange N."/>
            <person name="Gaspin C."/>
            <person name="Lavie M."/>
            <person name="Moisan A."/>
            <person name="Robert C."/>
            <person name="Saurin W."/>
            <person name="Schiex T."/>
            <person name="Siguier P."/>
            <person name="Thebault P."/>
            <person name="Whalen M."/>
            <person name="Wincker P."/>
            <person name="Levy M."/>
            <person name="Weissenbach J."/>
            <person name="Boucher C.A."/>
        </authorList>
    </citation>
    <scope>NUCLEOTIDE SEQUENCE [LARGE SCALE GENOMIC DNA]</scope>
    <source>
        <strain>ATCC BAA-1114 / GMI1000</strain>
    </source>
</reference>